<protein>
    <recommendedName>
        <fullName evidence="9">Patatin-like phospholipase domain-containing protein 2</fullName>
        <ecNumber evidence="2">3.1.1.3</ecNumber>
    </recommendedName>
    <alternativeName>
        <fullName>Adipose triglyceride lipase</fullName>
    </alternativeName>
    <alternativeName>
        <fullName>Calcium-independent phospholipase A2-zeta</fullName>
        <shortName>iPLA2-zeta</shortName>
        <ecNumber evidence="2">3.1.1.4</ecNumber>
    </alternativeName>
</protein>
<sequence length="478" mass="52567">MFPRETKWNISFAGCGFLGVYHIGVASCLREHAPFLVANATHIYGASAGALTATALVTGACLGEAGANIIEVSKEARKRFLGPLHPSFNLVKTIRGCLLKTLPADCHTRASGRLGISLTRVSDGENVIISHFSSKDELIQANVCSTFIPVYCGLIPPTLQGVRYVDGGISDNLPLYELKNTITVSPFSGESDICPQDSSTNIHELRITNTSIQFNLRNLYRLSKALFPPEPMVLREMCKQGYRDGLRFLRRNGLLNQPNPLLALPPVVPQEEDAEEAAVTEERTGGEDRILEHLPARLNEALLEACVEPKDLMTTLSNMLPVRLATAMMVPYTLPLESAVSFTIRLLEWLPDVPEDIRWMKEQTGSICQYLVMRAKRKLGDHLPSRLSEQVELRRAQSLPSVPLSCATYSEALPNWVRNNLSLGDALAKWEECQRQLLLGLFCTNVAFPPDALRMRAPASPTATDPATPQDPSGLPPC</sequence>
<dbReference type="EC" id="3.1.1.3" evidence="2"/>
<dbReference type="EC" id="3.1.1.4" evidence="2"/>
<dbReference type="EMBL" id="AC109542">
    <property type="status" value="NOT_ANNOTATED_CDS"/>
    <property type="molecule type" value="Genomic_DNA"/>
</dbReference>
<dbReference type="RefSeq" id="NP_001101979.2">
    <property type="nucleotide sequence ID" value="NM_001108509.2"/>
</dbReference>
<dbReference type="RefSeq" id="XP_003749062.1">
    <property type="nucleotide sequence ID" value="XM_003749014.3"/>
</dbReference>
<dbReference type="RefSeq" id="XP_017459687.1">
    <property type="nucleotide sequence ID" value="XM_017604198.1"/>
</dbReference>
<dbReference type="SMR" id="P0C548"/>
<dbReference type="BioGRID" id="262869">
    <property type="interactions" value="1"/>
</dbReference>
<dbReference type="FunCoup" id="P0C548">
    <property type="interactions" value="262"/>
</dbReference>
<dbReference type="STRING" id="10116.ENSRNOP00000025319"/>
<dbReference type="GlyCosmos" id="P0C548">
    <property type="glycosylation" value="1 site, No reported glycans"/>
</dbReference>
<dbReference type="GlyGen" id="P0C548">
    <property type="glycosylation" value="1 site"/>
</dbReference>
<dbReference type="iPTMnet" id="P0C548"/>
<dbReference type="PhosphoSitePlus" id="P0C548"/>
<dbReference type="PaxDb" id="10116-ENSRNOP00000025319"/>
<dbReference type="Ensembl" id="ENSRNOT00000025319.7">
    <property type="protein sequence ID" value="ENSRNOP00000025319.5"/>
    <property type="gene ID" value="ENSRNOG00000069673.1"/>
</dbReference>
<dbReference type="GeneID" id="361676"/>
<dbReference type="KEGG" id="rno:361676"/>
<dbReference type="AGR" id="RGD:1309044"/>
<dbReference type="CTD" id="57104"/>
<dbReference type="RGD" id="1309044">
    <property type="gene designation" value="Pnpla2"/>
</dbReference>
<dbReference type="eggNOG" id="KOG3773">
    <property type="taxonomic scope" value="Eukaryota"/>
</dbReference>
<dbReference type="GeneTree" id="ENSGT00940000160155"/>
<dbReference type="HOGENOM" id="CLU_018371_0_1_1"/>
<dbReference type="InParanoid" id="P0C548"/>
<dbReference type="OMA" id="FPREATW"/>
<dbReference type="OrthoDB" id="58603at9989"/>
<dbReference type="PhylomeDB" id="P0C548"/>
<dbReference type="TreeFam" id="TF314272"/>
<dbReference type="Reactome" id="R-RNO-1482883">
    <property type="pathway name" value="Acyl chain remodeling of DAG and TAG"/>
</dbReference>
<dbReference type="Reactome" id="R-RNO-381426">
    <property type="pathway name" value="Regulation of Insulin-like Growth Factor (IGF) transport and uptake by Insulin-like Growth Factor Binding Proteins (IGFBPs)"/>
</dbReference>
<dbReference type="Reactome" id="R-RNO-8957275">
    <property type="pathway name" value="Post-translational protein phosphorylation"/>
</dbReference>
<dbReference type="UniPathway" id="UPA00256"/>
<dbReference type="PRO" id="PR:P0C548"/>
<dbReference type="Proteomes" id="UP000002494">
    <property type="component" value="Chromosome 1"/>
</dbReference>
<dbReference type="Bgee" id="ENSRNOG00000018736">
    <property type="expression patterns" value="Expressed in heart and 18 other cell types or tissues"/>
</dbReference>
<dbReference type="GO" id="GO:0005737">
    <property type="term" value="C:cytoplasm"/>
    <property type="evidence" value="ECO:0000250"/>
    <property type="project" value="UniProtKB"/>
</dbReference>
<dbReference type="GO" id="GO:0005829">
    <property type="term" value="C:cytosol"/>
    <property type="evidence" value="ECO:0000266"/>
    <property type="project" value="RGD"/>
</dbReference>
<dbReference type="GO" id="GO:0005811">
    <property type="term" value="C:lipid droplet"/>
    <property type="evidence" value="ECO:0000250"/>
    <property type="project" value="UniProtKB"/>
</dbReference>
<dbReference type="GO" id="GO:0016020">
    <property type="term" value="C:membrane"/>
    <property type="evidence" value="ECO:0000318"/>
    <property type="project" value="GO_Central"/>
</dbReference>
<dbReference type="GO" id="GO:0005886">
    <property type="term" value="C:plasma membrane"/>
    <property type="evidence" value="ECO:0000266"/>
    <property type="project" value="RGD"/>
</dbReference>
<dbReference type="GO" id="GO:0016411">
    <property type="term" value="F:acylglycerol O-acyltransferase activity"/>
    <property type="evidence" value="ECO:0000266"/>
    <property type="project" value="RGD"/>
</dbReference>
<dbReference type="GO" id="GO:0051265">
    <property type="term" value="F:diolein transacylation activity"/>
    <property type="evidence" value="ECO:0000250"/>
    <property type="project" value="UniProtKB"/>
</dbReference>
<dbReference type="GO" id="GO:0051264">
    <property type="term" value="F:mono-olein transacylation activity"/>
    <property type="evidence" value="ECO:0000250"/>
    <property type="project" value="UniProtKB"/>
</dbReference>
<dbReference type="GO" id="GO:0004623">
    <property type="term" value="F:phospholipase A2 activity"/>
    <property type="evidence" value="ECO:0000250"/>
    <property type="project" value="UniProtKB"/>
</dbReference>
<dbReference type="GO" id="GO:0050253">
    <property type="term" value="F:retinyl-palmitate esterase activity"/>
    <property type="evidence" value="ECO:0000250"/>
    <property type="project" value="UniProtKB"/>
</dbReference>
<dbReference type="GO" id="GO:0004806">
    <property type="term" value="F:triacylglycerol lipase activity"/>
    <property type="evidence" value="ECO:0000250"/>
    <property type="project" value="UniProtKB"/>
</dbReference>
<dbReference type="GO" id="GO:0006651">
    <property type="term" value="P:diacylglycerol biosynthetic process"/>
    <property type="evidence" value="ECO:0000250"/>
    <property type="project" value="UniProtKB"/>
</dbReference>
<dbReference type="GO" id="GO:0035356">
    <property type="term" value="P:intracellular triglyceride homeostasis"/>
    <property type="evidence" value="ECO:0000250"/>
    <property type="project" value="UniProtKB"/>
</dbReference>
<dbReference type="GO" id="GO:0016042">
    <property type="term" value="P:lipid catabolic process"/>
    <property type="evidence" value="ECO:0000266"/>
    <property type="project" value="RGD"/>
</dbReference>
<dbReference type="GO" id="GO:1905691">
    <property type="term" value="P:lipid droplet disassembly"/>
    <property type="evidence" value="ECO:0000266"/>
    <property type="project" value="RGD"/>
</dbReference>
<dbReference type="GO" id="GO:0160077">
    <property type="term" value="P:lipid droplet fusion"/>
    <property type="evidence" value="ECO:0000250"/>
    <property type="project" value="UniProtKB"/>
</dbReference>
<dbReference type="GO" id="GO:0034389">
    <property type="term" value="P:lipid droplet organization"/>
    <property type="evidence" value="ECO:0000266"/>
    <property type="project" value="RGD"/>
</dbReference>
<dbReference type="GO" id="GO:0055088">
    <property type="term" value="P:lipid homeostasis"/>
    <property type="evidence" value="ECO:0000318"/>
    <property type="project" value="GO_Central"/>
</dbReference>
<dbReference type="GO" id="GO:0019915">
    <property type="term" value="P:lipid storage"/>
    <property type="evidence" value="ECO:0000266"/>
    <property type="project" value="RGD"/>
</dbReference>
<dbReference type="GO" id="GO:0010891">
    <property type="term" value="P:negative regulation of triglyceride storage"/>
    <property type="evidence" value="ECO:0000250"/>
    <property type="project" value="UniProtKB"/>
</dbReference>
<dbReference type="GO" id="GO:0007603">
    <property type="term" value="P:phototransduction, visible light"/>
    <property type="evidence" value="ECO:0000266"/>
    <property type="project" value="RGD"/>
</dbReference>
<dbReference type="GO" id="GO:0010898">
    <property type="term" value="P:positive regulation of triglyceride catabolic process"/>
    <property type="evidence" value="ECO:0000250"/>
    <property type="project" value="UniProtKB"/>
</dbReference>
<dbReference type="GO" id="GO:0001523">
    <property type="term" value="P:retinoid metabolic process"/>
    <property type="evidence" value="ECO:0000266"/>
    <property type="project" value="RGD"/>
</dbReference>
<dbReference type="GO" id="GO:0019433">
    <property type="term" value="P:triglyceride catabolic process"/>
    <property type="evidence" value="ECO:0000250"/>
    <property type="project" value="UniProtKB"/>
</dbReference>
<dbReference type="CDD" id="cd07220">
    <property type="entry name" value="Pat_PNPLA2"/>
    <property type="match status" value="1"/>
</dbReference>
<dbReference type="FunFam" id="3.40.1090.10:FF:000021">
    <property type="entry name" value="Patatin-like phospholipase domain containing 2"/>
    <property type="match status" value="1"/>
</dbReference>
<dbReference type="FunFam" id="3.40.1090.10:FF:000003">
    <property type="entry name" value="Patatin-like phospholipase domain-containing protein 2"/>
    <property type="match status" value="1"/>
</dbReference>
<dbReference type="Gene3D" id="3.40.1090.10">
    <property type="entry name" value="Cytosolic phospholipase A2 catalytic domain"/>
    <property type="match status" value="1"/>
</dbReference>
<dbReference type="InterPro" id="IPR016035">
    <property type="entry name" value="Acyl_Trfase/lysoPLipase"/>
</dbReference>
<dbReference type="InterPro" id="IPR033562">
    <property type="entry name" value="PLPL"/>
</dbReference>
<dbReference type="InterPro" id="IPR033903">
    <property type="entry name" value="PNPLA2"/>
</dbReference>
<dbReference type="InterPro" id="IPR002641">
    <property type="entry name" value="PNPLA_dom"/>
</dbReference>
<dbReference type="PANTHER" id="PTHR12406">
    <property type="entry name" value="CALCIUM-INDEPENDENT PHOSPHOLIPASE A2 IPLA2 -RELATED"/>
    <property type="match status" value="1"/>
</dbReference>
<dbReference type="PANTHER" id="PTHR12406:SF29">
    <property type="entry name" value="PATATIN-LIKE PHOSPHOLIPASE DOMAIN-CONTAINING PROTEIN 2"/>
    <property type="match status" value="1"/>
</dbReference>
<dbReference type="Pfam" id="PF01734">
    <property type="entry name" value="Patatin"/>
    <property type="match status" value="1"/>
</dbReference>
<dbReference type="SUPFAM" id="SSF52151">
    <property type="entry name" value="FabD/lysophospholipase-like"/>
    <property type="match status" value="1"/>
</dbReference>
<dbReference type="PROSITE" id="PS51635">
    <property type="entry name" value="PNPLA"/>
    <property type="match status" value="1"/>
</dbReference>
<feature type="chain" id="PRO_0000292529" description="Patatin-like phospholipase domain-containing protein 2">
    <location>
        <begin position="1"/>
        <end position="478"/>
    </location>
</feature>
<feature type="topological domain" description="Cytoplasmic" evidence="2">
    <location>
        <begin position="1"/>
        <end position="8"/>
    </location>
</feature>
<feature type="transmembrane region" description="Helical" evidence="3">
    <location>
        <begin position="9"/>
        <end position="29"/>
    </location>
</feature>
<feature type="topological domain" description="Extracellular" evidence="2">
    <location>
        <begin position="30"/>
        <end position="42"/>
    </location>
</feature>
<feature type="transmembrane region" description="Helical" evidence="3">
    <location>
        <begin position="43"/>
        <end position="63"/>
    </location>
</feature>
<feature type="topological domain" description="Cytoplasmic" evidence="2">
    <location>
        <begin position="64"/>
        <end position="137"/>
    </location>
</feature>
<feature type="transmembrane region" description="Helical" evidence="3">
    <location>
        <begin position="138"/>
        <end position="158"/>
    </location>
</feature>
<feature type="topological domain" description="Extracellular" evidence="2">
    <location>
        <begin position="159"/>
        <end position="323"/>
    </location>
</feature>
<feature type="transmembrane region" description="Helical" evidence="3">
    <location>
        <begin position="324"/>
        <end position="344"/>
    </location>
</feature>
<feature type="topological domain" description="Cytoplasmic" evidence="2">
    <location>
        <begin position="345"/>
        <end position="478"/>
    </location>
</feature>
<feature type="domain" description="PNPLA" evidence="4">
    <location>
        <begin position="10"/>
        <end position="179"/>
    </location>
</feature>
<feature type="region of interest" description="Disordered" evidence="5">
    <location>
        <begin position="456"/>
        <end position="478"/>
    </location>
</feature>
<feature type="short sequence motif" description="GXGXXG" evidence="4">
    <location>
        <begin position="14"/>
        <end position="19"/>
    </location>
</feature>
<feature type="short sequence motif" description="GXSXG" evidence="4">
    <location>
        <begin position="45"/>
        <end position="49"/>
    </location>
</feature>
<feature type="short sequence motif" description="DGA/G" evidence="4">
    <location>
        <begin position="166"/>
        <end position="168"/>
    </location>
</feature>
<feature type="compositionally biased region" description="Low complexity" evidence="5">
    <location>
        <begin position="457"/>
        <end position="478"/>
    </location>
</feature>
<feature type="active site" description="Nucleophile" evidence="4">
    <location>
        <position position="47"/>
    </location>
</feature>
<feature type="active site" description="Proton acceptor" evidence="4">
    <location>
        <position position="166"/>
    </location>
</feature>
<feature type="modified residue" description="Phosphoserine; in vitro" evidence="1">
    <location>
        <position position="366"/>
    </location>
</feature>
<feature type="modified residue" description="Phosphoserine; by PKA" evidence="1">
    <location>
        <position position="388"/>
    </location>
</feature>
<feature type="modified residue" description="Phosphoserine" evidence="11">
    <location>
        <position position="398"/>
    </location>
</feature>
<feature type="modified residue" description="Phosphoserine" evidence="11">
    <location>
        <position position="422"/>
    </location>
</feature>
<feature type="modified residue" description="Phosphoserine; in vitro" evidence="1">
    <location>
        <position position="460"/>
    </location>
</feature>
<feature type="glycosylation site" description="N-linked (GlcNAc...) asparagine" evidence="3">
    <location>
        <position position="39"/>
    </location>
</feature>
<feature type="cross-link" description="Glycyl lysine isopeptide (Lys-Gly) (interchain with G-Cter in ubiquitin)" evidence="2">
    <location>
        <position position="92"/>
    </location>
</feature>
<reference key="1">
    <citation type="journal article" date="2004" name="Nature">
        <title>Genome sequence of the Brown Norway rat yields insights into mammalian evolution.</title>
        <authorList>
            <person name="Gibbs R.A."/>
            <person name="Weinstock G.M."/>
            <person name="Metzker M.L."/>
            <person name="Muzny D.M."/>
            <person name="Sodergren E.J."/>
            <person name="Scherer S."/>
            <person name="Scott G."/>
            <person name="Steffen D."/>
            <person name="Worley K.C."/>
            <person name="Burch P.E."/>
            <person name="Okwuonu G."/>
            <person name="Hines S."/>
            <person name="Lewis L."/>
            <person name="Deramo C."/>
            <person name="Delgado O."/>
            <person name="Dugan-Rocha S."/>
            <person name="Miner G."/>
            <person name="Morgan M."/>
            <person name="Hawes A."/>
            <person name="Gill R."/>
            <person name="Holt R.A."/>
            <person name="Adams M.D."/>
            <person name="Amanatides P.G."/>
            <person name="Baden-Tillson H."/>
            <person name="Barnstead M."/>
            <person name="Chin S."/>
            <person name="Evans C.A."/>
            <person name="Ferriera S."/>
            <person name="Fosler C."/>
            <person name="Glodek A."/>
            <person name="Gu Z."/>
            <person name="Jennings D."/>
            <person name="Kraft C.L."/>
            <person name="Nguyen T."/>
            <person name="Pfannkoch C.M."/>
            <person name="Sitter C."/>
            <person name="Sutton G.G."/>
            <person name="Venter J.C."/>
            <person name="Woodage T."/>
            <person name="Smith D."/>
            <person name="Lee H.-M."/>
            <person name="Gustafson E."/>
            <person name="Cahill P."/>
            <person name="Kana A."/>
            <person name="Doucette-Stamm L."/>
            <person name="Weinstock K."/>
            <person name="Fechtel K."/>
            <person name="Weiss R.B."/>
            <person name="Dunn D.M."/>
            <person name="Green E.D."/>
            <person name="Blakesley R.W."/>
            <person name="Bouffard G.G."/>
            <person name="De Jong P.J."/>
            <person name="Osoegawa K."/>
            <person name="Zhu B."/>
            <person name="Marra M."/>
            <person name="Schein J."/>
            <person name="Bosdet I."/>
            <person name="Fjell C."/>
            <person name="Jones S."/>
            <person name="Krzywinski M."/>
            <person name="Mathewson C."/>
            <person name="Siddiqui A."/>
            <person name="Wye N."/>
            <person name="McPherson J."/>
            <person name="Zhao S."/>
            <person name="Fraser C.M."/>
            <person name="Shetty J."/>
            <person name="Shatsman S."/>
            <person name="Geer K."/>
            <person name="Chen Y."/>
            <person name="Abramzon S."/>
            <person name="Nierman W.C."/>
            <person name="Havlak P.H."/>
            <person name="Chen R."/>
            <person name="Durbin K.J."/>
            <person name="Egan A."/>
            <person name="Ren Y."/>
            <person name="Song X.-Z."/>
            <person name="Li B."/>
            <person name="Liu Y."/>
            <person name="Qin X."/>
            <person name="Cawley S."/>
            <person name="Cooney A.J."/>
            <person name="D'Souza L.M."/>
            <person name="Martin K."/>
            <person name="Wu J.Q."/>
            <person name="Gonzalez-Garay M.L."/>
            <person name="Jackson A.R."/>
            <person name="Kalafus K.J."/>
            <person name="McLeod M.P."/>
            <person name="Milosavljevic A."/>
            <person name="Virk D."/>
            <person name="Volkov A."/>
            <person name="Wheeler D.A."/>
            <person name="Zhang Z."/>
            <person name="Bailey J.A."/>
            <person name="Eichler E.E."/>
            <person name="Tuzun E."/>
            <person name="Birney E."/>
            <person name="Mongin E."/>
            <person name="Ureta-Vidal A."/>
            <person name="Woodwark C."/>
            <person name="Zdobnov E."/>
            <person name="Bork P."/>
            <person name="Suyama M."/>
            <person name="Torrents D."/>
            <person name="Alexandersson M."/>
            <person name="Trask B.J."/>
            <person name="Young J.M."/>
            <person name="Huang H."/>
            <person name="Wang H."/>
            <person name="Xing H."/>
            <person name="Daniels S."/>
            <person name="Gietzen D."/>
            <person name="Schmidt J."/>
            <person name="Stevens K."/>
            <person name="Vitt U."/>
            <person name="Wingrove J."/>
            <person name="Camara F."/>
            <person name="Mar Alba M."/>
            <person name="Abril J.F."/>
            <person name="Guigo R."/>
            <person name="Smit A."/>
            <person name="Dubchak I."/>
            <person name="Rubin E.M."/>
            <person name="Couronne O."/>
            <person name="Poliakov A."/>
            <person name="Huebner N."/>
            <person name="Ganten D."/>
            <person name="Goesele C."/>
            <person name="Hummel O."/>
            <person name="Kreitler T."/>
            <person name="Lee Y.-A."/>
            <person name="Monti J."/>
            <person name="Schulz H."/>
            <person name="Zimdahl H."/>
            <person name="Himmelbauer H."/>
            <person name="Lehrach H."/>
            <person name="Jacob H.J."/>
            <person name="Bromberg S."/>
            <person name="Gullings-Handley J."/>
            <person name="Jensen-Seaman M.I."/>
            <person name="Kwitek A.E."/>
            <person name="Lazar J."/>
            <person name="Pasko D."/>
            <person name="Tonellato P.J."/>
            <person name="Twigger S."/>
            <person name="Ponting C.P."/>
            <person name="Duarte J.M."/>
            <person name="Rice S."/>
            <person name="Goodstadt L."/>
            <person name="Beatson S.A."/>
            <person name="Emes R.D."/>
            <person name="Winter E.E."/>
            <person name="Webber C."/>
            <person name="Brandt P."/>
            <person name="Nyakatura G."/>
            <person name="Adetobi M."/>
            <person name="Chiaromonte F."/>
            <person name="Elnitski L."/>
            <person name="Eswara P."/>
            <person name="Hardison R.C."/>
            <person name="Hou M."/>
            <person name="Kolbe D."/>
            <person name="Makova K."/>
            <person name="Miller W."/>
            <person name="Nekrutenko A."/>
            <person name="Riemer C."/>
            <person name="Schwartz S."/>
            <person name="Taylor J."/>
            <person name="Yang S."/>
            <person name="Zhang Y."/>
            <person name="Lindpaintner K."/>
            <person name="Andrews T.D."/>
            <person name="Caccamo M."/>
            <person name="Clamp M."/>
            <person name="Clarke L."/>
            <person name="Curwen V."/>
            <person name="Durbin R.M."/>
            <person name="Eyras E."/>
            <person name="Searle S.M."/>
            <person name="Cooper G.M."/>
            <person name="Batzoglou S."/>
            <person name="Brudno M."/>
            <person name="Sidow A."/>
            <person name="Stone E.A."/>
            <person name="Payseur B.A."/>
            <person name="Bourque G."/>
            <person name="Lopez-Otin C."/>
            <person name="Puente X.S."/>
            <person name="Chakrabarti K."/>
            <person name="Chatterji S."/>
            <person name="Dewey C."/>
            <person name="Pachter L."/>
            <person name="Bray N."/>
            <person name="Yap V.B."/>
            <person name="Caspi A."/>
            <person name="Tesler G."/>
            <person name="Pevzner P.A."/>
            <person name="Haussler D."/>
            <person name="Roskin K.M."/>
            <person name="Baertsch R."/>
            <person name="Clawson H."/>
            <person name="Furey T.S."/>
            <person name="Hinrichs A.S."/>
            <person name="Karolchik D."/>
            <person name="Kent W.J."/>
            <person name="Rosenbloom K.R."/>
            <person name="Trumbower H."/>
            <person name="Weirauch M."/>
            <person name="Cooper D.N."/>
            <person name="Stenson P.D."/>
            <person name="Ma B."/>
            <person name="Brent M."/>
            <person name="Arumugam M."/>
            <person name="Shteynberg D."/>
            <person name="Copley R.R."/>
            <person name="Taylor M.S."/>
            <person name="Riethman H."/>
            <person name="Mudunuri U."/>
            <person name="Peterson J."/>
            <person name="Guyer M."/>
            <person name="Felsenfeld A."/>
            <person name="Old S."/>
            <person name="Mockrin S."/>
            <person name="Collins F.S."/>
        </authorList>
    </citation>
    <scope>NUCLEOTIDE SEQUENCE [LARGE SCALE GENOMIC DNA]</scope>
    <source>
        <strain>Brown Norway</strain>
    </source>
</reference>
<reference key="2">
    <citation type="journal article" date="2006" name="Diabetologia">
        <title>PPARgamma agonism increases rat adipose tissue lipolysis, expression of glyceride lipases, and the response of lipolysis to hormonal control.</title>
        <authorList>
            <person name="Festuccia W.T."/>
            <person name="Laplante M."/>
            <person name="Berthiaume M."/>
            <person name="Gelinas Y."/>
            <person name="Deshaies Y."/>
        </authorList>
    </citation>
    <scope>INDUCTION</scope>
</reference>
<reference key="3">
    <citation type="journal article" date="2012" name="Nat. Commun.">
        <title>Quantitative maps of protein phosphorylation sites across 14 different rat organs and tissues.</title>
        <authorList>
            <person name="Lundby A."/>
            <person name="Secher A."/>
            <person name="Lage K."/>
            <person name="Nordsborg N.B."/>
            <person name="Dmytriyev A."/>
            <person name="Lundby C."/>
            <person name="Olsen J.V."/>
        </authorList>
    </citation>
    <scope>PHOSPHORYLATION [LARGE SCALE ANALYSIS] AT SER-398 AND SER-422</scope>
    <scope>IDENTIFICATION BY MASS SPECTROMETRY [LARGE SCALE ANALYSIS]</scope>
</reference>
<reference key="4">
    <citation type="journal article" date="2013" name="Am. J. Physiol.">
        <title>Skeletal muscle PLIN proteins, ATGL and CGI-58, interactions at rest and following stimulated contraction.</title>
        <authorList>
            <person name="MacPherson R.E."/>
            <person name="Ramos S.V."/>
            <person name="Vandenboom R."/>
            <person name="Roy B.D."/>
            <person name="Peters S.J."/>
        </authorList>
    </citation>
    <scope>INTERACTION WITH PLIN5</scope>
</reference>
<reference key="5">
    <citation type="journal article" date="2013" name="Physiol. Rep.">
        <title>Skeletal muscle PLIN3 and PLIN5 are serine phosphorylated at rest and following lipolysis during adrenergic or contractile stimulation.</title>
        <authorList>
            <person name="Macpherson R.E."/>
            <person name="Vandenboom R."/>
            <person name="Roy B.D."/>
            <person name="Peters S.J."/>
        </authorList>
    </citation>
    <scope>INTERACTION WITH PLIN5</scope>
</reference>
<name>PLPL2_RAT</name>
<evidence type="ECO:0000250" key="1">
    <source>
        <dbReference type="UniProtKB" id="Q8BJ56"/>
    </source>
</evidence>
<evidence type="ECO:0000250" key="2">
    <source>
        <dbReference type="UniProtKB" id="Q96AD5"/>
    </source>
</evidence>
<evidence type="ECO:0000255" key="3"/>
<evidence type="ECO:0000255" key="4">
    <source>
        <dbReference type="PROSITE-ProRule" id="PRU01161"/>
    </source>
</evidence>
<evidence type="ECO:0000256" key="5">
    <source>
        <dbReference type="SAM" id="MobiDB-lite"/>
    </source>
</evidence>
<evidence type="ECO:0000269" key="6">
    <source>
    </source>
</evidence>
<evidence type="ECO:0000269" key="7">
    <source>
    </source>
</evidence>
<evidence type="ECO:0000269" key="8">
    <source>
    </source>
</evidence>
<evidence type="ECO:0000305" key="9"/>
<evidence type="ECO:0000312" key="10">
    <source>
        <dbReference type="RGD" id="1309044"/>
    </source>
</evidence>
<evidence type="ECO:0007744" key="11">
    <source>
    </source>
</evidence>
<keyword id="KW-1003">Cell membrane</keyword>
<keyword id="KW-0963">Cytoplasm</keyword>
<keyword id="KW-0325">Glycoprotein</keyword>
<keyword id="KW-0378">Hydrolase</keyword>
<keyword id="KW-1017">Isopeptide bond</keyword>
<keyword id="KW-0442">Lipid degradation</keyword>
<keyword id="KW-0551">Lipid droplet</keyword>
<keyword id="KW-0443">Lipid metabolism</keyword>
<keyword id="KW-0472">Membrane</keyword>
<keyword id="KW-0597">Phosphoprotein</keyword>
<keyword id="KW-1185">Reference proteome</keyword>
<keyword id="KW-0735">Signal-anchor</keyword>
<keyword id="KW-0812">Transmembrane</keyword>
<keyword id="KW-1133">Transmembrane helix</keyword>
<keyword id="KW-0832">Ubl conjugation</keyword>
<gene>
    <name evidence="10" type="primary">Pnpla2</name>
    <name type="synonym">Atgl</name>
</gene>
<proteinExistence type="evidence at protein level"/>
<organism>
    <name type="scientific">Rattus norvegicus</name>
    <name type="common">Rat</name>
    <dbReference type="NCBI Taxonomy" id="10116"/>
    <lineage>
        <taxon>Eukaryota</taxon>
        <taxon>Metazoa</taxon>
        <taxon>Chordata</taxon>
        <taxon>Craniata</taxon>
        <taxon>Vertebrata</taxon>
        <taxon>Euteleostomi</taxon>
        <taxon>Mammalia</taxon>
        <taxon>Eutheria</taxon>
        <taxon>Euarchontoglires</taxon>
        <taxon>Glires</taxon>
        <taxon>Rodentia</taxon>
        <taxon>Myomorpha</taxon>
        <taxon>Muroidea</taxon>
        <taxon>Muridae</taxon>
        <taxon>Murinae</taxon>
        <taxon>Rattus</taxon>
    </lineage>
</organism>
<comment type="function">
    <text evidence="1 2">Catalyzes the initial step in triglyceride hydrolysis in adipocyte and non-adipocyte lipid droplets (By similarity). Exhibits a strong preference for the hydrolysis of long-chain fatty acid esters at the sn-2 position of the glycerol backbone and acts coordinately with LIPE/HLS and DGAT2 within the lipolytic cascade (By similarity). Also possesses acylglycerol transacylase and phospholipase A2 activities (By similarity). Transfers fatty acid from triglyceride to retinol, hydrolyzes retinylesters, and generates 1,3-diacylglycerol from triglycerides (By similarity). Regulates adiposome size and may be involved in the degradation of adiposomes (By similarity). Catalyzes the formation of an ester bond between hydroxy fatty acids and fatty acids derived from triglycerides or diglycerides to generate fatty acid esters of hydroxy fatty acids (FAHFAs) in adipocytes (By similarity). Acts antagonistically with LDAH in regulation of cellular lipid stores (By similarity). Inhibits LDAH-stimulated lipid droplet fusion (By similarity). May play an important role in energy homeostasis (By similarity). May play a role in the response of the organism to starvation, enhancing hydrolysis of triglycerides and providing free fatty acids to other tissues to be oxidized in situations of energy depletion (By similarity).</text>
</comment>
<comment type="catalytic activity">
    <reaction evidence="2">
        <text>a triacylglycerol + H2O = a diacylglycerol + a fatty acid + H(+)</text>
        <dbReference type="Rhea" id="RHEA:12044"/>
        <dbReference type="ChEBI" id="CHEBI:15377"/>
        <dbReference type="ChEBI" id="CHEBI:15378"/>
        <dbReference type="ChEBI" id="CHEBI:17855"/>
        <dbReference type="ChEBI" id="CHEBI:18035"/>
        <dbReference type="ChEBI" id="CHEBI:28868"/>
        <dbReference type="EC" id="3.1.1.3"/>
    </reaction>
    <physiologicalReaction direction="left-to-right" evidence="2">
        <dbReference type="Rhea" id="RHEA:12045"/>
    </physiologicalReaction>
</comment>
<comment type="catalytic activity">
    <reaction evidence="2">
        <text>a triacylglycerol + H2O = a 1,2-diacylglycerol + a fatty acid + H(+)</text>
        <dbReference type="Rhea" id="RHEA:35667"/>
        <dbReference type="ChEBI" id="CHEBI:15377"/>
        <dbReference type="ChEBI" id="CHEBI:15378"/>
        <dbReference type="ChEBI" id="CHEBI:17855"/>
        <dbReference type="ChEBI" id="CHEBI:28868"/>
        <dbReference type="ChEBI" id="CHEBI:49172"/>
    </reaction>
    <physiologicalReaction direction="left-to-right" evidence="2">
        <dbReference type="Rhea" id="RHEA:35668"/>
    </physiologicalReaction>
</comment>
<comment type="catalytic activity">
    <reaction evidence="2">
        <text>a triacylglycerol + H2O = a 1,3-diacylglycerol + a fatty acid + H(+)</text>
        <dbReference type="Rhea" id="RHEA:38495"/>
        <dbReference type="ChEBI" id="CHEBI:15377"/>
        <dbReference type="ChEBI" id="CHEBI:15378"/>
        <dbReference type="ChEBI" id="CHEBI:17855"/>
        <dbReference type="ChEBI" id="CHEBI:28868"/>
        <dbReference type="ChEBI" id="CHEBI:47777"/>
    </reaction>
    <physiologicalReaction direction="left-to-right" evidence="2">
        <dbReference type="Rhea" id="RHEA:38496"/>
    </physiologicalReaction>
</comment>
<comment type="catalytic activity">
    <reaction evidence="1">
        <text>a triacyl-sn-glycerol + H2O = a 1,3-diacyl-sn-glycerol + a fatty acid + H(+)</text>
        <dbReference type="Rhea" id="RHEA:43732"/>
        <dbReference type="ChEBI" id="CHEBI:15377"/>
        <dbReference type="ChEBI" id="CHEBI:15378"/>
        <dbReference type="ChEBI" id="CHEBI:28868"/>
        <dbReference type="ChEBI" id="CHEBI:64615"/>
        <dbReference type="ChEBI" id="CHEBI:77272"/>
    </reaction>
    <physiologicalReaction direction="left-to-right" evidence="1">
        <dbReference type="Rhea" id="RHEA:43733"/>
    </physiologicalReaction>
</comment>
<comment type="catalytic activity">
    <reaction evidence="1">
        <text>a triacyl-sn-glycerol + H2O = a 2,3-diacyl-sn-glycerol + a fatty acid + H(+)</text>
        <dbReference type="Rhea" id="RHEA:38499"/>
        <dbReference type="ChEBI" id="CHEBI:15377"/>
        <dbReference type="ChEBI" id="CHEBI:15378"/>
        <dbReference type="ChEBI" id="CHEBI:28868"/>
        <dbReference type="ChEBI" id="CHEBI:64615"/>
        <dbReference type="ChEBI" id="CHEBI:75524"/>
    </reaction>
    <physiologicalReaction direction="left-to-right" evidence="1">
        <dbReference type="Rhea" id="RHEA:38500"/>
    </physiologicalReaction>
</comment>
<comment type="catalytic activity">
    <reaction evidence="2">
        <text>a 1-acylglycerol + a 1,3-diacylglycerol = a triacylglycerol + glycerol</text>
        <dbReference type="Rhea" id="RHEA:44440"/>
        <dbReference type="ChEBI" id="CHEBI:17754"/>
        <dbReference type="ChEBI" id="CHEBI:17855"/>
        <dbReference type="ChEBI" id="CHEBI:35759"/>
        <dbReference type="ChEBI" id="CHEBI:47777"/>
    </reaction>
    <physiologicalReaction direction="left-to-right" evidence="2">
        <dbReference type="Rhea" id="RHEA:44441"/>
    </physiologicalReaction>
</comment>
<comment type="catalytic activity">
    <reaction evidence="2">
        <text>a 1-acylglycerol + a 1,2-diacylglycerol = a triacylglycerol + glycerol</text>
        <dbReference type="Rhea" id="RHEA:44436"/>
        <dbReference type="ChEBI" id="CHEBI:17754"/>
        <dbReference type="ChEBI" id="CHEBI:17855"/>
        <dbReference type="ChEBI" id="CHEBI:35759"/>
        <dbReference type="ChEBI" id="CHEBI:49172"/>
    </reaction>
    <physiologicalReaction direction="left-to-right" evidence="2">
        <dbReference type="Rhea" id="RHEA:44437"/>
    </physiologicalReaction>
</comment>
<comment type="catalytic activity">
    <reaction evidence="2">
        <text>2 a 1-acylglycerol = a 1,2-diacylglycerol + glycerol</text>
        <dbReference type="Rhea" id="RHEA:44432"/>
        <dbReference type="ChEBI" id="CHEBI:17754"/>
        <dbReference type="ChEBI" id="CHEBI:35759"/>
        <dbReference type="ChEBI" id="CHEBI:49172"/>
    </reaction>
    <physiologicalReaction direction="left-to-right" evidence="2">
        <dbReference type="Rhea" id="RHEA:44433"/>
    </physiologicalReaction>
</comment>
<comment type="catalytic activity">
    <reaction evidence="2">
        <text>a triacylglycerol + all-trans-retinol = an all-trans-retinyl ester + a diacylglycerol</text>
        <dbReference type="Rhea" id="RHEA:44676"/>
        <dbReference type="ChEBI" id="CHEBI:17336"/>
        <dbReference type="ChEBI" id="CHEBI:17855"/>
        <dbReference type="ChEBI" id="CHEBI:18035"/>
        <dbReference type="ChEBI" id="CHEBI:63410"/>
    </reaction>
    <physiologicalReaction direction="left-to-right" evidence="2">
        <dbReference type="Rhea" id="RHEA:44677"/>
    </physiologicalReaction>
</comment>
<comment type="catalytic activity">
    <reaction evidence="2">
        <text>1,2-di-(9Z-octadecenoyl)-glycerol + (9Z)-octadecenoate + H(+) = 1,2,3-tri-(9Z-octadecenoyl)-glycerol + H2O</text>
        <dbReference type="Rhea" id="RHEA:38379"/>
        <dbReference type="ChEBI" id="CHEBI:15377"/>
        <dbReference type="ChEBI" id="CHEBI:15378"/>
        <dbReference type="ChEBI" id="CHEBI:30823"/>
        <dbReference type="ChEBI" id="CHEBI:52323"/>
        <dbReference type="ChEBI" id="CHEBI:53753"/>
    </reaction>
    <physiologicalReaction direction="right-to-left" evidence="2">
        <dbReference type="Rhea" id="RHEA:38381"/>
    </physiologicalReaction>
</comment>
<comment type="catalytic activity">
    <reaction evidence="2">
        <text>1,2,3-tri-(9Z-octadecenoyl)-glycerol + H2O = 1,3-di-(9Z-octadecenoyl)-glycerol + (9Z)-octadecenoate + H(+)</text>
        <dbReference type="Rhea" id="RHEA:38387"/>
        <dbReference type="ChEBI" id="CHEBI:15377"/>
        <dbReference type="ChEBI" id="CHEBI:15378"/>
        <dbReference type="ChEBI" id="CHEBI:30823"/>
        <dbReference type="ChEBI" id="CHEBI:53753"/>
        <dbReference type="ChEBI" id="CHEBI:75735"/>
    </reaction>
    <physiologicalReaction direction="left-to-right" evidence="2">
        <dbReference type="Rhea" id="RHEA:38388"/>
    </physiologicalReaction>
</comment>
<comment type="catalytic activity">
    <reaction evidence="2">
        <text>1-(9Z-octadecenoyl)-glycerol + 1,3-di-(9Z-octadecenoyl)-glycerol = 1,2,3-tri-(9Z-octadecenoyl)-glycerol + glycerol</text>
        <dbReference type="Rhea" id="RHEA:38331"/>
        <dbReference type="ChEBI" id="CHEBI:17754"/>
        <dbReference type="ChEBI" id="CHEBI:53753"/>
        <dbReference type="ChEBI" id="CHEBI:75342"/>
        <dbReference type="ChEBI" id="CHEBI:75735"/>
    </reaction>
    <physiologicalReaction direction="left-to-right" evidence="2">
        <dbReference type="Rhea" id="RHEA:38332"/>
    </physiologicalReaction>
</comment>
<comment type="catalytic activity">
    <reaction evidence="2">
        <text>1-(9Z-octadecenoyl)-glycerol + 1,2-di-(9Z-octadecenoyl)-glycerol = 1,2,3-tri-(9Z-octadecenoyl)-glycerol + glycerol</text>
        <dbReference type="Rhea" id="RHEA:38327"/>
        <dbReference type="ChEBI" id="CHEBI:17754"/>
        <dbReference type="ChEBI" id="CHEBI:52323"/>
        <dbReference type="ChEBI" id="CHEBI:53753"/>
        <dbReference type="ChEBI" id="CHEBI:75342"/>
    </reaction>
    <physiologicalReaction direction="left-to-right" evidence="2">
        <dbReference type="Rhea" id="RHEA:38328"/>
    </physiologicalReaction>
</comment>
<comment type="catalytic activity">
    <reaction evidence="2">
        <text>2 1-(9Z-octadecenoyl)-glycerol = 1,2-di-(9Z-octadecenoyl)-glycerol + glycerol</text>
        <dbReference type="Rhea" id="RHEA:38323"/>
        <dbReference type="ChEBI" id="CHEBI:17754"/>
        <dbReference type="ChEBI" id="CHEBI:52323"/>
        <dbReference type="ChEBI" id="CHEBI:75342"/>
    </reaction>
    <physiologicalReaction direction="left-to-right" evidence="2">
        <dbReference type="Rhea" id="RHEA:38324"/>
    </physiologicalReaction>
</comment>
<comment type="catalytic activity">
    <reaction evidence="2">
        <text>1,2,3-tri-(9Z-octadecenoyl)-glycerol + all-trans-retinol = all-trans-retinyl 9Z-octadecenoate + di-(9Z)-octadecenoylglycerol</text>
        <dbReference type="Rhea" id="RHEA:39987"/>
        <dbReference type="ChEBI" id="CHEBI:17336"/>
        <dbReference type="ChEBI" id="CHEBI:53753"/>
        <dbReference type="ChEBI" id="CHEBI:70760"/>
        <dbReference type="ChEBI" id="CHEBI:75945"/>
    </reaction>
    <physiologicalReaction direction="left-to-right" evidence="2">
        <dbReference type="Rhea" id="RHEA:39988"/>
    </physiologicalReaction>
</comment>
<comment type="catalytic activity">
    <reaction evidence="1">
        <text>1,2,3-tri-(9Z)-hexadecenoylglycerol + H2O = 1,3-di-(9Z)-hexadecenoylglycerol + (9Z)-hexadecenoate + H(+)</text>
        <dbReference type="Rhea" id="RHEA:38395"/>
        <dbReference type="ChEBI" id="CHEBI:15377"/>
        <dbReference type="ChEBI" id="CHEBI:15378"/>
        <dbReference type="ChEBI" id="CHEBI:32372"/>
        <dbReference type="ChEBI" id="CHEBI:75841"/>
        <dbReference type="ChEBI" id="CHEBI:75849"/>
    </reaction>
    <physiologicalReaction direction="left-to-right" evidence="1">
        <dbReference type="Rhea" id="RHEA:38396"/>
    </physiologicalReaction>
</comment>
<comment type="catalytic activity">
    <reaction evidence="1">
        <text>1,2,3-tri-(9Z,12Z)-octadecadienoylglycerol + H2O = 1,3-di-(9Z,12Z)-octadecadienoylglycerol + (9Z,12Z)-octadecadienoate + H(+)</text>
        <dbReference type="Rhea" id="RHEA:38403"/>
        <dbReference type="ChEBI" id="CHEBI:15377"/>
        <dbReference type="ChEBI" id="CHEBI:15378"/>
        <dbReference type="ChEBI" id="CHEBI:30245"/>
        <dbReference type="ChEBI" id="CHEBI:75844"/>
        <dbReference type="ChEBI" id="CHEBI:75850"/>
    </reaction>
    <physiologicalReaction direction="left-to-right" evidence="1">
        <dbReference type="Rhea" id="RHEA:38404"/>
    </physiologicalReaction>
</comment>
<comment type="catalytic activity">
    <reaction evidence="1">
        <text>1,2,3-tri-(9Z,12Z,15Z)-octadecatrienoylglycerol + H2O = 1,3-di-(9Z,12Z,15Z)-octadecatrienoylglycerol + (9Z,12Z,15Z)-octadecatrienoate + H(+)</text>
        <dbReference type="Rhea" id="RHEA:38411"/>
        <dbReference type="ChEBI" id="CHEBI:15377"/>
        <dbReference type="ChEBI" id="CHEBI:15378"/>
        <dbReference type="ChEBI" id="CHEBI:32387"/>
        <dbReference type="ChEBI" id="CHEBI:75845"/>
        <dbReference type="ChEBI" id="CHEBI:75852"/>
    </reaction>
    <physiologicalReaction direction="left-to-right" evidence="1">
        <dbReference type="Rhea" id="RHEA:38412"/>
    </physiologicalReaction>
</comment>
<comment type="catalytic activity">
    <reaction evidence="1">
        <text>1,3-di-(9Z)-octadecenoyl-2-hexadecanoylglycerol + H2O = 1,3-di-(9Z-octadecenoyl)-glycerol + hexadecanoate + H(+)</text>
        <dbReference type="Rhea" id="RHEA:38419"/>
        <dbReference type="ChEBI" id="CHEBI:7896"/>
        <dbReference type="ChEBI" id="CHEBI:15377"/>
        <dbReference type="ChEBI" id="CHEBI:15378"/>
        <dbReference type="ChEBI" id="CHEBI:75735"/>
        <dbReference type="ChEBI" id="CHEBI:75846"/>
    </reaction>
    <physiologicalReaction direction="left-to-right" evidence="1">
        <dbReference type="Rhea" id="RHEA:38420"/>
    </physiologicalReaction>
</comment>
<comment type="catalytic activity">
    <reaction evidence="1">
        <text>1,2-di-(9Z)-octadecenoyl-3-hexadecanoyl-sn-glycerol + H2O = 1-(9Z)-octadecenoyl-3-hexadecanoyl-sn-glycerol + (9Z)-octadecenoate + H(+)</text>
        <dbReference type="Rhea" id="RHEA:38423"/>
        <dbReference type="ChEBI" id="CHEBI:15377"/>
        <dbReference type="ChEBI" id="CHEBI:15378"/>
        <dbReference type="ChEBI" id="CHEBI:30823"/>
        <dbReference type="ChEBI" id="CHEBI:75583"/>
        <dbReference type="ChEBI" id="CHEBI:75867"/>
    </reaction>
    <physiologicalReaction direction="left-to-right" evidence="1">
        <dbReference type="Rhea" id="RHEA:38424"/>
    </physiologicalReaction>
</comment>
<comment type="catalytic activity">
    <reaction evidence="1">
        <text>1-hexadecanoyl-2,3-di-(9Z)-octadecenoyl-sn-glycerol + H2O = 1-hexadecanoyl-3-(9Z)-octadecenoyl-sn-glycerol + (9Z)-octadecenoate + H(+)</text>
        <dbReference type="Rhea" id="RHEA:38647"/>
        <dbReference type="ChEBI" id="CHEBI:15377"/>
        <dbReference type="ChEBI" id="CHEBI:15378"/>
        <dbReference type="ChEBI" id="CHEBI:30823"/>
        <dbReference type="ChEBI" id="CHEBI:75847"/>
        <dbReference type="ChEBI" id="CHEBI:75868"/>
    </reaction>
    <physiologicalReaction direction="left-to-right" evidence="1">
        <dbReference type="Rhea" id="RHEA:38648"/>
    </physiologicalReaction>
</comment>
<comment type="catalytic activity">
    <reaction evidence="1">
        <text>1,2,3-tri-(9Z-octadecenoyl)-glycerol + H2O = 2,3-di-(9Z)-octadecenoyl-sn-glycerol + (9Z)-octadecenoate + H(+)</text>
        <dbReference type="Rhea" id="RHEA:38391"/>
        <dbReference type="ChEBI" id="CHEBI:15377"/>
        <dbReference type="ChEBI" id="CHEBI:15378"/>
        <dbReference type="ChEBI" id="CHEBI:30823"/>
        <dbReference type="ChEBI" id="CHEBI:53753"/>
        <dbReference type="ChEBI" id="CHEBI:75824"/>
    </reaction>
    <physiologicalReaction direction="left-to-right" evidence="1">
        <dbReference type="Rhea" id="RHEA:38392"/>
    </physiologicalReaction>
</comment>
<comment type="catalytic activity">
    <reaction evidence="1">
        <text>1,2,3-tri-(9Z)-hexadecenoylglycerol + H2O = 2,3-di-(9Z)-hexadecenoyl-sn-glycerol + (9Z)-hexadecenoate + H(+)</text>
        <dbReference type="Rhea" id="RHEA:38399"/>
        <dbReference type="ChEBI" id="CHEBI:15377"/>
        <dbReference type="ChEBI" id="CHEBI:15378"/>
        <dbReference type="ChEBI" id="CHEBI:32372"/>
        <dbReference type="ChEBI" id="CHEBI:75841"/>
        <dbReference type="ChEBI" id="CHEBI:75853"/>
    </reaction>
    <physiologicalReaction direction="left-to-right" evidence="1">
        <dbReference type="Rhea" id="RHEA:38400"/>
    </physiologicalReaction>
</comment>
<comment type="catalytic activity">
    <reaction evidence="1">
        <text>1,2,3-tri-(9Z,12Z)-octadecadienoylglycerol + H2O = 2,3-di-(9Z,12Z)-octadecadienoyl-sn-glycerol + (9Z,12Z)-octadecadienoate + H(+)</text>
        <dbReference type="Rhea" id="RHEA:38407"/>
        <dbReference type="ChEBI" id="CHEBI:15377"/>
        <dbReference type="ChEBI" id="CHEBI:15378"/>
        <dbReference type="ChEBI" id="CHEBI:30245"/>
        <dbReference type="ChEBI" id="CHEBI:75844"/>
        <dbReference type="ChEBI" id="CHEBI:75854"/>
    </reaction>
    <physiologicalReaction direction="left-to-right" evidence="1">
        <dbReference type="Rhea" id="RHEA:38408"/>
    </physiologicalReaction>
</comment>
<comment type="catalytic activity">
    <reaction evidence="1">
        <text>1,2,3-tri-(9Z,12Z,15Z)-octadecatrienoylglycerol + H2O = 2,3-di-(9Z,12Z,15Z)-octadecatrienoyl-sn-glycerol + (9Z,12Z,15Z)-octadecatrienoate + H(+)</text>
        <dbReference type="Rhea" id="RHEA:38415"/>
        <dbReference type="ChEBI" id="CHEBI:15377"/>
        <dbReference type="ChEBI" id="CHEBI:15378"/>
        <dbReference type="ChEBI" id="CHEBI:32387"/>
        <dbReference type="ChEBI" id="CHEBI:75845"/>
        <dbReference type="ChEBI" id="CHEBI:75855"/>
    </reaction>
    <physiologicalReaction direction="left-to-right" evidence="1">
        <dbReference type="Rhea" id="RHEA:38416"/>
    </physiologicalReaction>
</comment>
<comment type="catalytic activity">
    <reaction evidence="1">
        <text>1,3-di-(9Z)-octadecenoyl-2-hexadecanoylglycerol + H2O = 2-hexadecanoyl-3-(9Z)-octadecenoyl-sn-glycerol + (9Z)-octadecenoate + H(+)</text>
        <dbReference type="Rhea" id="RHEA:38431"/>
        <dbReference type="ChEBI" id="CHEBI:15377"/>
        <dbReference type="ChEBI" id="CHEBI:15378"/>
        <dbReference type="ChEBI" id="CHEBI:30823"/>
        <dbReference type="ChEBI" id="CHEBI:75846"/>
        <dbReference type="ChEBI" id="CHEBI:75870"/>
    </reaction>
    <physiologicalReaction direction="left-to-right" evidence="1">
        <dbReference type="Rhea" id="RHEA:38432"/>
    </physiologicalReaction>
</comment>
<comment type="catalytic activity">
    <reaction evidence="1">
        <text>1-hexadecanoyl-2,3-di-(9Z)-octadecenoyl-sn-glycerol + H2O = 2,3-di-(9Z)-octadecenoyl-sn-glycerol + hexadecanoate + H(+)</text>
        <dbReference type="Rhea" id="RHEA:38427"/>
        <dbReference type="ChEBI" id="CHEBI:7896"/>
        <dbReference type="ChEBI" id="CHEBI:15377"/>
        <dbReference type="ChEBI" id="CHEBI:15378"/>
        <dbReference type="ChEBI" id="CHEBI:75824"/>
        <dbReference type="ChEBI" id="CHEBI:75847"/>
    </reaction>
    <physiologicalReaction direction="left-to-right" evidence="1">
        <dbReference type="Rhea" id="RHEA:38428"/>
    </physiologicalReaction>
</comment>
<comment type="catalytic activity">
    <reaction evidence="1">
        <text>1,2-di-(9Z)-octadecenoyl-3-hexadecanoyl-sn-glycerol + H2O = 2-(9Z-octadecenoyl)-3-hexadecanoyl-sn-glycerol + (9Z)-octadecenoate + H(+)</text>
        <dbReference type="Rhea" id="RHEA:38643"/>
        <dbReference type="ChEBI" id="CHEBI:15377"/>
        <dbReference type="ChEBI" id="CHEBI:15378"/>
        <dbReference type="ChEBI" id="CHEBI:30823"/>
        <dbReference type="ChEBI" id="CHEBI:75546"/>
        <dbReference type="ChEBI" id="CHEBI:75583"/>
    </reaction>
    <physiologicalReaction direction="left-to-right" evidence="1">
        <dbReference type="Rhea" id="RHEA:38644"/>
    </physiologicalReaction>
</comment>
<comment type="catalytic activity">
    <reaction evidence="2">
        <text>a 1,2-diacyl-sn-glycero-3-phosphocholine + H2O = a 1-acyl-sn-glycero-3-phosphocholine + a fatty acid + H(+)</text>
        <dbReference type="Rhea" id="RHEA:15801"/>
        <dbReference type="ChEBI" id="CHEBI:15377"/>
        <dbReference type="ChEBI" id="CHEBI:15378"/>
        <dbReference type="ChEBI" id="CHEBI:28868"/>
        <dbReference type="ChEBI" id="CHEBI:57643"/>
        <dbReference type="ChEBI" id="CHEBI:58168"/>
        <dbReference type="EC" id="3.1.1.4"/>
    </reaction>
    <physiologicalReaction direction="left-to-right" evidence="2">
        <dbReference type="Rhea" id="RHEA:15802"/>
    </physiologicalReaction>
</comment>
<comment type="catalytic activity">
    <reaction evidence="2">
        <text>1,2,3-tri-(9Z-octadecenoyl)-glycerol + 9-hydroxy-octadecanoate = 9-(9Z-octadecenoyloxy)-octadecanoate + 2,3-di-(9Z)-octadecenoyl-sn-glycerol</text>
        <dbReference type="Rhea" id="RHEA:75011"/>
        <dbReference type="ChEBI" id="CHEBI:53753"/>
        <dbReference type="ChEBI" id="CHEBI:75824"/>
        <dbReference type="ChEBI" id="CHEBI:136282"/>
        <dbReference type="ChEBI" id="CHEBI:136286"/>
    </reaction>
</comment>
<comment type="catalytic activity">
    <reaction evidence="2">
        <text>1-hexadecanoyl-2,3-di-(9Z)-octadecenoyl-sn-glycerol + 9-hydroxy-octadecanoate = 9-hexadecanoyloxy-octadecanoate + 2,3-di-(9Z)-octadecenoyl-sn-glycerol</text>
        <dbReference type="Rhea" id="RHEA:75015"/>
        <dbReference type="ChEBI" id="CHEBI:75824"/>
        <dbReference type="ChEBI" id="CHEBI:75847"/>
        <dbReference type="ChEBI" id="CHEBI:83670"/>
        <dbReference type="ChEBI" id="CHEBI:136286"/>
    </reaction>
</comment>
<comment type="catalytic activity">
    <reaction evidence="2">
        <text>1,2,3-tri-(10Z)-heptadecenoylglycerol + 9-hydroxy-octadecanoate = 2,3-di-(10Z-heptadecenoyl)-sn-glycerol + 9-(10Z-heptadecenoyloxy)-octadecanoate</text>
        <dbReference type="Rhea" id="RHEA:75019"/>
        <dbReference type="ChEBI" id="CHEBI:136286"/>
        <dbReference type="ChEBI" id="CHEBI:194143"/>
        <dbReference type="ChEBI" id="CHEBI:194145"/>
        <dbReference type="ChEBI" id="CHEBI:228204"/>
    </reaction>
</comment>
<comment type="catalytic activity">
    <reaction evidence="2">
        <text>1,2,3-tri-(9Z,12Z)-octadecadienoylglycerol + 9-hydroxy-octadecanoate = 2,3-di-(9Z,12Z)-octadecadienoyl-sn-glycerol + 9-(9Z,12Z-octadecadienoyloxy)-octadecanoate</text>
        <dbReference type="Rhea" id="RHEA:75023"/>
        <dbReference type="ChEBI" id="CHEBI:75844"/>
        <dbReference type="ChEBI" id="CHEBI:75854"/>
        <dbReference type="ChEBI" id="CHEBI:136286"/>
        <dbReference type="ChEBI" id="CHEBI:194142"/>
    </reaction>
</comment>
<comment type="catalytic activity">
    <reaction evidence="2">
        <text>1,2,3-tri-(9Z)-hexadecenoylglycerol + 9-hydroxy-octadecanoate = 2,3-di-(9Z)-hexadecenoyl-sn-glycerol + 9-(9Z-hexadecenoyloxy)-octadecanoate</text>
        <dbReference type="Rhea" id="RHEA:75027"/>
        <dbReference type="ChEBI" id="CHEBI:75841"/>
        <dbReference type="ChEBI" id="CHEBI:75853"/>
        <dbReference type="ChEBI" id="CHEBI:136286"/>
        <dbReference type="ChEBI" id="CHEBI:136309"/>
    </reaction>
</comment>
<comment type="catalytic activity">
    <reaction evidence="2">
        <text>9-hydroxy-octadecanoate + 1,2-di-(9Z-octadecenoyl)-sn-glycerol = 9-(9Z-octadecenoyloxy)-octadecanoate + 2-(9Z-octadecenoyl)-glycerol</text>
        <dbReference type="Rhea" id="RHEA:75031"/>
        <dbReference type="ChEBI" id="CHEBI:52333"/>
        <dbReference type="ChEBI" id="CHEBI:73990"/>
        <dbReference type="ChEBI" id="CHEBI:136282"/>
        <dbReference type="ChEBI" id="CHEBI:136286"/>
    </reaction>
</comment>
<comment type="catalytic activity">
    <reaction evidence="2">
        <text>1-hexadecanoyl-2,3-di-(9Z)-octadecenoyl-sn-glycerol + 9-hydroxy-octadecanoate = 1-hexadecanoyl-3-(9Z)-octadecenoyl-sn-glycerol + 9-(9Z-octadecenoyloxy)-octadecanoate</text>
        <dbReference type="Rhea" id="RHEA:75035"/>
        <dbReference type="ChEBI" id="CHEBI:75847"/>
        <dbReference type="ChEBI" id="CHEBI:75868"/>
        <dbReference type="ChEBI" id="CHEBI:136282"/>
        <dbReference type="ChEBI" id="CHEBI:136286"/>
    </reaction>
</comment>
<comment type="pathway">
    <text>Glycerolipid metabolism; triacylglycerol degradation.</text>
</comment>
<comment type="subunit">
    <text evidence="1 2 7 8">Interacts with ABHD5; this association stimulates PNPLA2 triglyceride hydrolase activity (By similarity). Interacts with SERPINF1; this interaction stimulates the phospholipase A2 activity of PNPLA2 (By similarity). Despite a colocalization in lipid droplets, it probably does not interact with PLIN (By similarity). Interacts with PLIN5; prevents interaction with ABHD5 (PubMed:23408028, PubMed:24303154). Interacts with FAF2 (By similarity).</text>
</comment>
<comment type="subcellular location">
    <subcellularLocation>
        <location evidence="2">Lipid droplet</location>
    </subcellularLocation>
    <subcellularLocation>
        <location evidence="2">Cell membrane</location>
        <topology evidence="3">Multi-pass membrane protein</topology>
    </subcellularLocation>
    <subcellularLocation>
        <location evidence="1">Cytoplasm</location>
    </subcellularLocation>
</comment>
<comment type="induction">
    <text evidence="6">Increased by rosiglitazone in subcutaneous and visceral white adipose tissue.</text>
</comment>
<comment type="PTM">
    <text evidence="1">Phosphorylation at Ser-398 by PKA is increased during fasting and moderate intensity exercise, and moderately increases lipolytic activity.</text>
</comment>
<comment type="PTM">
    <text evidence="2">Ubiquitinated by PEX2 in response to reactive oxygen species (ROS), leading to its degradation (By similarity). Ubiquitination is stimulated by LDAH (By similarity).</text>
</comment>
<accession>P0C548</accession>